<evidence type="ECO:0000255" key="1">
    <source>
        <dbReference type="HAMAP-Rule" id="MF_01371"/>
    </source>
</evidence>
<evidence type="ECO:0000305" key="2"/>
<proteinExistence type="inferred from homology"/>
<sequence length="75" mass="8541">MSKLKITYRKSAIGYSHDQKATIRSLGLRRLNSVVVHDDTPTIRGMIFKVRHLVSVEELPDRDAPADHPGDDMKR</sequence>
<reference key="1">
    <citation type="submission" date="2007-08" db="EMBL/GenBank/DDBJ databases">
        <title>Complete sequence of Roseiflexus castenholzii DSM 13941.</title>
        <authorList>
            <consortium name="US DOE Joint Genome Institute"/>
            <person name="Copeland A."/>
            <person name="Lucas S."/>
            <person name="Lapidus A."/>
            <person name="Barry K."/>
            <person name="Glavina del Rio T."/>
            <person name="Dalin E."/>
            <person name="Tice H."/>
            <person name="Pitluck S."/>
            <person name="Thompson L.S."/>
            <person name="Brettin T."/>
            <person name="Bruce D."/>
            <person name="Detter J.C."/>
            <person name="Han C."/>
            <person name="Tapia R."/>
            <person name="Schmutz J."/>
            <person name="Larimer F."/>
            <person name="Land M."/>
            <person name="Hauser L."/>
            <person name="Kyrpides N."/>
            <person name="Mikhailova N."/>
            <person name="Bryant D.A."/>
            <person name="Hanada S."/>
            <person name="Tsukatani Y."/>
            <person name="Richardson P."/>
        </authorList>
    </citation>
    <scope>NUCLEOTIDE SEQUENCE [LARGE SCALE GENOMIC DNA]</scope>
    <source>
        <strain>DSM 13941 / HLO8</strain>
    </source>
</reference>
<comment type="subunit">
    <text evidence="1">Part of the 50S ribosomal subunit.</text>
</comment>
<comment type="similarity">
    <text evidence="1">Belongs to the universal ribosomal protein uL30 family.</text>
</comment>
<dbReference type="EMBL" id="CP000804">
    <property type="protein sequence ID" value="ABU60041.1"/>
    <property type="molecule type" value="Genomic_DNA"/>
</dbReference>
<dbReference type="RefSeq" id="WP_012122463.1">
    <property type="nucleotide sequence ID" value="NC_009767.1"/>
</dbReference>
<dbReference type="SMR" id="A7NR45"/>
<dbReference type="STRING" id="383372.Rcas_4008"/>
<dbReference type="KEGG" id="rca:Rcas_4008"/>
<dbReference type="eggNOG" id="COG1841">
    <property type="taxonomic scope" value="Bacteria"/>
</dbReference>
<dbReference type="HOGENOM" id="CLU_131047_2_0_0"/>
<dbReference type="OrthoDB" id="9812790at2"/>
<dbReference type="Proteomes" id="UP000000263">
    <property type="component" value="Chromosome"/>
</dbReference>
<dbReference type="GO" id="GO:0022625">
    <property type="term" value="C:cytosolic large ribosomal subunit"/>
    <property type="evidence" value="ECO:0007669"/>
    <property type="project" value="TreeGrafter"/>
</dbReference>
<dbReference type="GO" id="GO:0003735">
    <property type="term" value="F:structural constituent of ribosome"/>
    <property type="evidence" value="ECO:0007669"/>
    <property type="project" value="InterPro"/>
</dbReference>
<dbReference type="GO" id="GO:0006412">
    <property type="term" value="P:translation"/>
    <property type="evidence" value="ECO:0007669"/>
    <property type="project" value="UniProtKB-UniRule"/>
</dbReference>
<dbReference type="CDD" id="cd01658">
    <property type="entry name" value="Ribosomal_L30"/>
    <property type="match status" value="1"/>
</dbReference>
<dbReference type="FunFam" id="3.30.1390.20:FF:000001">
    <property type="entry name" value="50S ribosomal protein L30"/>
    <property type="match status" value="1"/>
</dbReference>
<dbReference type="Gene3D" id="3.30.1390.20">
    <property type="entry name" value="Ribosomal protein L30, ferredoxin-like fold domain"/>
    <property type="match status" value="1"/>
</dbReference>
<dbReference type="HAMAP" id="MF_01371_B">
    <property type="entry name" value="Ribosomal_uL30_B"/>
    <property type="match status" value="1"/>
</dbReference>
<dbReference type="InterPro" id="IPR036919">
    <property type="entry name" value="Ribo_uL30_ferredoxin-like_sf"/>
</dbReference>
<dbReference type="InterPro" id="IPR005996">
    <property type="entry name" value="Ribosomal_uL30_bac-type"/>
</dbReference>
<dbReference type="InterPro" id="IPR018038">
    <property type="entry name" value="Ribosomal_uL30_CS"/>
</dbReference>
<dbReference type="InterPro" id="IPR016082">
    <property type="entry name" value="Ribosomal_uL30_ferredoxin-like"/>
</dbReference>
<dbReference type="NCBIfam" id="TIGR01308">
    <property type="entry name" value="rpmD_bact"/>
    <property type="match status" value="1"/>
</dbReference>
<dbReference type="PANTHER" id="PTHR15892:SF2">
    <property type="entry name" value="LARGE RIBOSOMAL SUBUNIT PROTEIN UL30M"/>
    <property type="match status" value="1"/>
</dbReference>
<dbReference type="PANTHER" id="PTHR15892">
    <property type="entry name" value="MITOCHONDRIAL RIBOSOMAL PROTEIN L30"/>
    <property type="match status" value="1"/>
</dbReference>
<dbReference type="Pfam" id="PF00327">
    <property type="entry name" value="Ribosomal_L30"/>
    <property type="match status" value="1"/>
</dbReference>
<dbReference type="SUPFAM" id="SSF55129">
    <property type="entry name" value="Ribosomal protein L30p/L7e"/>
    <property type="match status" value="1"/>
</dbReference>
<dbReference type="PROSITE" id="PS00634">
    <property type="entry name" value="RIBOSOMAL_L30"/>
    <property type="match status" value="1"/>
</dbReference>
<gene>
    <name evidence="1" type="primary">rpmD</name>
    <name type="ordered locus">Rcas_4008</name>
</gene>
<protein>
    <recommendedName>
        <fullName evidence="1">Large ribosomal subunit protein uL30</fullName>
    </recommendedName>
    <alternativeName>
        <fullName evidence="2">50S ribosomal protein L30</fullName>
    </alternativeName>
</protein>
<keyword id="KW-1185">Reference proteome</keyword>
<keyword id="KW-0687">Ribonucleoprotein</keyword>
<keyword id="KW-0689">Ribosomal protein</keyword>
<name>RL30_ROSCS</name>
<organism>
    <name type="scientific">Roseiflexus castenholzii (strain DSM 13941 / HLO8)</name>
    <dbReference type="NCBI Taxonomy" id="383372"/>
    <lineage>
        <taxon>Bacteria</taxon>
        <taxon>Bacillati</taxon>
        <taxon>Chloroflexota</taxon>
        <taxon>Chloroflexia</taxon>
        <taxon>Chloroflexales</taxon>
        <taxon>Roseiflexineae</taxon>
        <taxon>Roseiflexaceae</taxon>
        <taxon>Roseiflexus</taxon>
    </lineage>
</organism>
<accession>A7NR45</accession>
<feature type="chain" id="PRO_0000347139" description="Large ribosomal subunit protein uL30">
    <location>
        <begin position="1"/>
        <end position="75"/>
    </location>
</feature>